<keyword id="KW-0028">Amino-acid biosynthesis</keyword>
<keyword id="KW-0963">Cytoplasm</keyword>
<keyword id="KW-0315">Glutamine amidotransferase</keyword>
<keyword id="KW-0368">Histidine biosynthesis</keyword>
<keyword id="KW-0378">Hydrolase</keyword>
<keyword id="KW-0456">Lyase</keyword>
<keyword id="KW-1185">Reference proteome</keyword>
<dbReference type="EC" id="4.3.2.10" evidence="1"/>
<dbReference type="EC" id="3.5.1.2" evidence="1"/>
<dbReference type="EMBL" id="CP000077">
    <property type="protein sequence ID" value="AAY80894.1"/>
    <property type="molecule type" value="Genomic_DNA"/>
</dbReference>
<dbReference type="RefSeq" id="WP_011278396.1">
    <property type="nucleotide sequence ID" value="NC_007181.1"/>
</dbReference>
<dbReference type="SMR" id="Q4J8I5"/>
<dbReference type="STRING" id="330779.Saci_1581"/>
<dbReference type="GeneID" id="14552074"/>
<dbReference type="GeneID" id="78441924"/>
<dbReference type="KEGG" id="sai:Saci_1581"/>
<dbReference type="PATRIC" id="fig|330779.12.peg.1521"/>
<dbReference type="eggNOG" id="arCOG00089">
    <property type="taxonomic scope" value="Archaea"/>
</dbReference>
<dbReference type="HOGENOM" id="CLU_071837_2_2_2"/>
<dbReference type="UniPathway" id="UPA00031">
    <property type="reaction ID" value="UER00010"/>
</dbReference>
<dbReference type="Proteomes" id="UP000001018">
    <property type="component" value="Chromosome"/>
</dbReference>
<dbReference type="GO" id="GO:0005737">
    <property type="term" value="C:cytoplasm"/>
    <property type="evidence" value="ECO:0007669"/>
    <property type="project" value="UniProtKB-SubCell"/>
</dbReference>
<dbReference type="GO" id="GO:0004359">
    <property type="term" value="F:glutaminase activity"/>
    <property type="evidence" value="ECO:0007669"/>
    <property type="project" value="UniProtKB-EC"/>
</dbReference>
<dbReference type="GO" id="GO:0000107">
    <property type="term" value="F:imidazoleglycerol-phosphate synthase activity"/>
    <property type="evidence" value="ECO:0007669"/>
    <property type="project" value="UniProtKB-UniRule"/>
</dbReference>
<dbReference type="GO" id="GO:0016829">
    <property type="term" value="F:lyase activity"/>
    <property type="evidence" value="ECO:0007669"/>
    <property type="project" value="UniProtKB-KW"/>
</dbReference>
<dbReference type="GO" id="GO:0000105">
    <property type="term" value="P:L-histidine biosynthetic process"/>
    <property type="evidence" value="ECO:0007669"/>
    <property type="project" value="UniProtKB-UniRule"/>
</dbReference>
<dbReference type="CDD" id="cd01748">
    <property type="entry name" value="GATase1_IGP_Synthase"/>
    <property type="match status" value="1"/>
</dbReference>
<dbReference type="Gene3D" id="3.40.50.880">
    <property type="match status" value="1"/>
</dbReference>
<dbReference type="HAMAP" id="MF_00278">
    <property type="entry name" value="HisH"/>
    <property type="match status" value="1"/>
</dbReference>
<dbReference type="InterPro" id="IPR029062">
    <property type="entry name" value="Class_I_gatase-like"/>
</dbReference>
<dbReference type="InterPro" id="IPR017926">
    <property type="entry name" value="GATASE"/>
</dbReference>
<dbReference type="InterPro" id="IPR010139">
    <property type="entry name" value="Imidazole-glycPsynth_HisH"/>
</dbReference>
<dbReference type="NCBIfam" id="TIGR01855">
    <property type="entry name" value="IMP_synth_hisH"/>
    <property type="match status" value="1"/>
</dbReference>
<dbReference type="PANTHER" id="PTHR42701">
    <property type="entry name" value="IMIDAZOLE GLYCEROL PHOSPHATE SYNTHASE SUBUNIT HISH"/>
    <property type="match status" value="1"/>
</dbReference>
<dbReference type="PANTHER" id="PTHR42701:SF1">
    <property type="entry name" value="IMIDAZOLE GLYCEROL PHOSPHATE SYNTHASE SUBUNIT HISH"/>
    <property type="match status" value="1"/>
</dbReference>
<dbReference type="Pfam" id="PF00117">
    <property type="entry name" value="GATase"/>
    <property type="match status" value="1"/>
</dbReference>
<dbReference type="PIRSF" id="PIRSF000495">
    <property type="entry name" value="Amidotransf_hisH"/>
    <property type="match status" value="1"/>
</dbReference>
<dbReference type="SUPFAM" id="SSF52317">
    <property type="entry name" value="Class I glutamine amidotransferase-like"/>
    <property type="match status" value="1"/>
</dbReference>
<dbReference type="PROSITE" id="PS51273">
    <property type="entry name" value="GATASE_TYPE_1"/>
    <property type="match status" value="1"/>
</dbReference>
<accession>Q4J8I5</accession>
<proteinExistence type="inferred from homology"/>
<sequence>MRAVIIDYGVGNLFSIYSGLRRVGFEVEISKEPKGSEDLIVFPGVGSFSAVSKYLVARKEKFEVLRSNGTGFLGICLGMQIMFEEGTEGGLNKGLGWLKGRVDKINHPRVKIPHIGWDKVNVIKYNELSEGIDDQYVYYAHSYVAYPTDKSVILSTTSYGIDYPAVVNIGNIVGTQFHPEKSSLVGRKFLTNVYRWLRK</sequence>
<protein>
    <recommendedName>
        <fullName evidence="1">Imidazole glycerol phosphate synthase subunit HisH</fullName>
        <ecNumber evidence="1">4.3.2.10</ecNumber>
    </recommendedName>
    <alternativeName>
        <fullName evidence="1">IGP synthase glutaminase subunit</fullName>
        <ecNumber evidence="1">3.5.1.2</ecNumber>
    </alternativeName>
    <alternativeName>
        <fullName evidence="1">IGP synthase subunit HisH</fullName>
    </alternativeName>
    <alternativeName>
        <fullName evidence="1">ImGP synthase subunit HisH</fullName>
        <shortName evidence="1">IGPS subunit HisH</shortName>
    </alternativeName>
</protein>
<feature type="chain" id="PRO_0000152468" description="Imidazole glycerol phosphate synthase subunit HisH">
    <location>
        <begin position="1"/>
        <end position="199"/>
    </location>
</feature>
<feature type="domain" description="Glutamine amidotransferase type-1" evidence="1">
    <location>
        <begin position="2"/>
        <end position="199"/>
    </location>
</feature>
<feature type="active site" description="Nucleophile" evidence="1">
    <location>
        <position position="76"/>
    </location>
</feature>
<feature type="active site" evidence="1">
    <location>
        <position position="178"/>
    </location>
</feature>
<feature type="active site" evidence="1">
    <location>
        <position position="180"/>
    </location>
</feature>
<gene>
    <name evidence="1" type="primary">hisH</name>
    <name type="ordered locus">Saci_1581</name>
</gene>
<reference key="1">
    <citation type="journal article" date="2005" name="J. Bacteriol.">
        <title>The genome of Sulfolobus acidocaldarius, a model organism of the Crenarchaeota.</title>
        <authorList>
            <person name="Chen L."/>
            <person name="Bruegger K."/>
            <person name="Skovgaard M."/>
            <person name="Redder P."/>
            <person name="She Q."/>
            <person name="Torarinsson E."/>
            <person name="Greve B."/>
            <person name="Awayez M."/>
            <person name="Zibat A."/>
            <person name="Klenk H.-P."/>
            <person name="Garrett R.A."/>
        </authorList>
    </citation>
    <scope>NUCLEOTIDE SEQUENCE [LARGE SCALE GENOMIC DNA]</scope>
    <source>
        <strain>ATCC 33909 / DSM 639 / JCM 8929 / NBRC 15157 / NCIMB 11770</strain>
    </source>
</reference>
<comment type="function">
    <text evidence="1">IGPS catalyzes the conversion of PRFAR and glutamine to IGP, AICAR and glutamate. The HisH subunit catalyzes the hydrolysis of glutamine to glutamate and ammonia as part of the synthesis of IGP and AICAR. The resulting ammonia molecule is channeled to the active site of HisF.</text>
</comment>
<comment type="catalytic activity">
    <reaction evidence="1">
        <text>5-[(5-phospho-1-deoxy-D-ribulos-1-ylimino)methylamino]-1-(5-phospho-beta-D-ribosyl)imidazole-4-carboxamide + L-glutamine = D-erythro-1-(imidazol-4-yl)glycerol 3-phosphate + 5-amino-1-(5-phospho-beta-D-ribosyl)imidazole-4-carboxamide + L-glutamate + H(+)</text>
        <dbReference type="Rhea" id="RHEA:24793"/>
        <dbReference type="ChEBI" id="CHEBI:15378"/>
        <dbReference type="ChEBI" id="CHEBI:29985"/>
        <dbReference type="ChEBI" id="CHEBI:58278"/>
        <dbReference type="ChEBI" id="CHEBI:58359"/>
        <dbReference type="ChEBI" id="CHEBI:58475"/>
        <dbReference type="ChEBI" id="CHEBI:58525"/>
        <dbReference type="EC" id="4.3.2.10"/>
    </reaction>
</comment>
<comment type="catalytic activity">
    <reaction evidence="1">
        <text>L-glutamine + H2O = L-glutamate + NH4(+)</text>
        <dbReference type="Rhea" id="RHEA:15889"/>
        <dbReference type="ChEBI" id="CHEBI:15377"/>
        <dbReference type="ChEBI" id="CHEBI:28938"/>
        <dbReference type="ChEBI" id="CHEBI:29985"/>
        <dbReference type="ChEBI" id="CHEBI:58359"/>
        <dbReference type="EC" id="3.5.1.2"/>
    </reaction>
</comment>
<comment type="pathway">
    <text evidence="1">Amino-acid biosynthesis; L-histidine biosynthesis; L-histidine from 5-phospho-alpha-D-ribose 1-diphosphate: step 5/9.</text>
</comment>
<comment type="subunit">
    <text evidence="1">Heterodimer of HisH and HisF.</text>
</comment>
<comment type="subcellular location">
    <subcellularLocation>
        <location evidence="1">Cytoplasm</location>
    </subcellularLocation>
</comment>
<name>HIS5_SULAC</name>
<organism>
    <name type="scientific">Sulfolobus acidocaldarius (strain ATCC 33909 / DSM 639 / JCM 8929 / NBRC 15157 / NCIMB 11770)</name>
    <dbReference type="NCBI Taxonomy" id="330779"/>
    <lineage>
        <taxon>Archaea</taxon>
        <taxon>Thermoproteota</taxon>
        <taxon>Thermoprotei</taxon>
        <taxon>Sulfolobales</taxon>
        <taxon>Sulfolobaceae</taxon>
        <taxon>Sulfolobus</taxon>
    </lineage>
</organism>
<evidence type="ECO:0000255" key="1">
    <source>
        <dbReference type="HAMAP-Rule" id="MF_00278"/>
    </source>
</evidence>